<name>MOBA_BACC3</name>
<reference key="1">
    <citation type="submission" date="2009-02" db="EMBL/GenBank/DDBJ databases">
        <title>Genome sequence of Bacillus cereus 03BB102.</title>
        <authorList>
            <person name="Dodson R.J."/>
            <person name="Jackson P."/>
            <person name="Munk A.C."/>
            <person name="Brettin T."/>
            <person name="Bruce D."/>
            <person name="Detter C."/>
            <person name="Tapia R."/>
            <person name="Han C."/>
            <person name="Sutton G."/>
            <person name="Sims D."/>
        </authorList>
    </citation>
    <scope>NUCLEOTIDE SEQUENCE [LARGE SCALE GENOMIC DNA]</scope>
    <source>
        <strain>03BB102</strain>
    </source>
</reference>
<gene>
    <name evidence="1" type="primary">mobA</name>
    <name type="ordered locus">BCA_4886</name>
</gene>
<proteinExistence type="inferred from homology"/>
<keyword id="KW-0963">Cytoplasm</keyword>
<keyword id="KW-0342">GTP-binding</keyword>
<keyword id="KW-0460">Magnesium</keyword>
<keyword id="KW-0479">Metal-binding</keyword>
<keyword id="KW-0501">Molybdenum cofactor biosynthesis</keyword>
<keyword id="KW-0547">Nucleotide-binding</keyword>
<keyword id="KW-0808">Transferase</keyword>
<protein>
    <recommendedName>
        <fullName evidence="1">Probable molybdenum cofactor guanylyltransferase</fullName>
        <shortName evidence="1">MoCo guanylyltransferase</shortName>
        <ecNumber evidence="1">2.7.7.77</ecNumber>
    </recommendedName>
    <alternativeName>
        <fullName evidence="1">GTP:molybdopterin guanylyltransferase</fullName>
    </alternativeName>
    <alternativeName>
        <fullName evidence="1">Mo-MPT guanylyltransferase</fullName>
    </alternativeName>
    <alternativeName>
        <fullName evidence="1">Molybdopterin guanylyltransferase</fullName>
    </alternativeName>
    <alternativeName>
        <fullName evidence="1">Molybdopterin-guanine dinucleotide synthase</fullName>
        <shortName evidence="1">MGD synthase</shortName>
    </alternativeName>
</protein>
<organism>
    <name type="scientific">Bacillus cereus (strain 03BB102)</name>
    <dbReference type="NCBI Taxonomy" id="572264"/>
    <lineage>
        <taxon>Bacteria</taxon>
        <taxon>Bacillati</taxon>
        <taxon>Bacillota</taxon>
        <taxon>Bacilli</taxon>
        <taxon>Bacillales</taxon>
        <taxon>Bacillaceae</taxon>
        <taxon>Bacillus</taxon>
        <taxon>Bacillus cereus group</taxon>
    </lineage>
</organism>
<accession>C1EW31</accession>
<comment type="function">
    <text evidence="1">Transfers a GMP moiety from GTP to Mo-molybdopterin (Mo-MPT) cofactor (Moco or molybdenum cofactor) to form Mo-molybdopterin guanine dinucleotide (Mo-MGD) cofactor.</text>
</comment>
<comment type="catalytic activity">
    <reaction evidence="1">
        <text>Mo-molybdopterin + GTP + H(+) = Mo-molybdopterin guanine dinucleotide + diphosphate</text>
        <dbReference type="Rhea" id="RHEA:34243"/>
        <dbReference type="ChEBI" id="CHEBI:15378"/>
        <dbReference type="ChEBI" id="CHEBI:33019"/>
        <dbReference type="ChEBI" id="CHEBI:37565"/>
        <dbReference type="ChEBI" id="CHEBI:71302"/>
        <dbReference type="ChEBI" id="CHEBI:71310"/>
        <dbReference type="EC" id="2.7.7.77"/>
    </reaction>
</comment>
<comment type="cofactor">
    <cofactor evidence="1">
        <name>Mg(2+)</name>
        <dbReference type="ChEBI" id="CHEBI:18420"/>
    </cofactor>
</comment>
<comment type="subcellular location">
    <subcellularLocation>
        <location evidence="1">Cytoplasm</location>
    </subcellularLocation>
</comment>
<comment type="domain">
    <text evidence="1">The N-terminal domain determines nucleotide recognition and specific binding, while the C-terminal domain determines the specific binding to the target protein.</text>
</comment>
<comment type="similarity">
    <text evidence="1">Belongs to the MobA family.</text>
</comment>
<feature type="chain" id="PRO_1000132954" description="Probable molybdenum cofactor guanylyltransferase">
    <location>
        <begin position="1"/>
        <end position="200"/>
    </location>
</feature>
<feature type="binding site" evidence="1">
    <location>
        <begin position="9"/>
        <end position="11"/>
    </location>
    <ligand>
        <name>GTP</name>
        <dbReference type="ChEBI" id="CHEBI:37565"/>
    </ligand>
</feature>
<feature type="binding site" evidence="1">
    <location>
        <position position="21"/>
    </location>
    <ligand>
        <name>GTP</name>
        <dbReference type="ChEBI" id="CHEBI:37565"/>
    </ligand>
</feature>
<feature type="binding site" evidence="1">
    <location>
        <position position="69"/>
    </location>
    <ligand>
        <name>GTP</name>
        <dbReference type="ChEBI" id="CHEBI:37565"/>
    </ligand>
</feature>
<feature type="binding site" evidence="1">
    <location>
        <position position="100"/>
    </location>
    <ligand>
        <name>GTP</name>
        <dbReference type="ChEBI" id="CHEBI:37565"/>
    </ligand>
</feature>
<feature type="binding site" evidence="1">
    <location>
        <position position="100"/>
    </location>
    <ligand>
        <name>Mg(2+)</name>
        <dbReference type="ChEBI" id="CHEBI:18420"/>
    </ligand>
</feature>
<evidence type="ECO:0000255" key="1">
    <source>
        <dbReference type="HAMAP-Rule" id="MF_00316"/>
    </source>
</evidence>
<sequence length="200" mass="22399">MSKYAGIVLAGGMSSRFGEPKALASWQGGTFIEHILKVMTSTLQEVVVISHSDIKERVEKLVQVPVIEDIPHYKGNGPLAGIVSGMEYIEADWYAIMPCDAPNVSHEWFTILLGQTSNEYDAVVPIINGRKQPLLAAYHNRVKEKIYALLQEEKRSMVQLLSQCNVKYIAGEDVQANADWFINVNTKEEYVQAQKDLSNE</sequence>
<dbReference type="EC" id="2.7.7.77" evidence="1"/>
<dbReference type="EMBL" id="CP001407">
    <property type="protein sequence ID" value="ACO27323.1"/>
    <property type="molecule type" value="Genomic_DNA"/>
</dbReference>
<dbReference type="RefSeq" id="WP_000049602.1">
    <property type="nucleotide sequence ID" value="NZ_CP009318.1"/>
</dbReference>
<dbReference type="SMR" id="C1EW31"/>
<dbReference type="KEGG" id="bcx:BCA_4886"/>
<dbReference type="PATRIC" id="fig|572264.18.peg.4834"/>
<dbReference type="Proteomes" id="UP000002210">
    <property type="component" value="Chromosome"/>
</dbReference>
<dbReference type="GO" id="GO:0005737">
    <property type="term" value="C:cytoplasm"/>
    <property type="evidence" value="ECO:0007669"/>
    <property type="project" value="UniProtKB-SubCell"/>
</dbReference>
<dbReference type="GO" id="GO:0005525">
    <property type="term" value="F:GTP binding"/>
    <property type="evidence" value="ECO:0007669"/>
    <property type="project" value="UniProtKB-UniRule"/>
</dbReference>
<dbReference type="GO" id="GO:0046872">
    <property type="term" value="F:metal ion binding"/>
    <property type="evidence" value="ECO:0007669"/>
    <property type="project" value="UniProtKB-KW"/>
</dbReference>
<dbReference type="GO" id="GO:0061603">
    <property type="term" value="F:molybdenum cofactor guanylyltransferase activity"/>
    <property type="evidence" value="ECO:0007669"/>
    <property type="project" value="UniProtKB-EC"/>
</dbReference>
<dbReference type="GO" id="GO:0006777">
    <property type="term" value="P:Mo-molybdopterin cofactor biosynthetic process"/>
    <property type="evidence" value="ECO:0007669"/>
    <property type="project" value="UniProtKB-KW"/>
</dbReference>
<dbReference type="CDD" id="cd02503">
    <property type="entry name" value="MobA"/>
    <property type="match status" value="1"/>
</dbReference>
<dbReference type="FunFam" id="3.90.550.10:FF:000121">
    <property type="entry name" value="Probable molybdenum cofactor guanylyltransferase"/>
    <property type="match status" value="1"/>
</dbReference>
<dbReference type="Gene3D" id="3.90.550.10">
    <property type="entry name" value="Spore Coat Polysaccharide Biosynthesis Protein SpsA, Chain A"/>
    <property type="match status" value="1"/>
</dbReference>
<dbReference type="HAMAP" id="MF_00316">
    <property type="entry name" value="MobA"/>
    <property type="match status" value="1"/>
</dbReference>
<dbReference type="InterPro" id="IPR025877">
    <property type="entry name" value="MobA-like_NTP_Trfase"/>
</dbReference>
<dbReference type="InterPro" id="IPR013482">
    <property type="entry name" value="Molybde_CF_guanTrfase"/>
</dbReference>
<dbReference type="InterPro" id="IPR029044">
    <property type="entry name" value="Nucleotide-diphossugar_trans"/>
</dbReference>
<dbReference type="PANTHER" id="PTHR19136">
    <property type="entry name" value="MOLYBDENUM COFACTOR GUANYLYLTRANSFERASE"/>
    <property type="match status" value="1"/>
</dbReference>
<dbReference type="PANTHER" id="PTHR19136:SF81">
    <property type="entry name" value="MOLYBDENUM COFACTOR GUANYLYLTRANSFERASE"/>
    <property type="match status" value="1"/>
</dbReference>
<dbReference type="Pfam" id="PF12804">
    <property type="entry name" value="NTP_transf_3"/>
    <property type="match status" value="1"/>
</dbReference>
<dbReference type="SUPFAM" id="SSF53448">
    <property type="entry name" value="Nucleotide-diphospho-sugar transferases"/>
    <property type="match status" value="1"/>
</dbReference>